<sequence length="299" mass="33095">MVAVTELGYLGLTVTNLDAWRSYAAEVAGMEIVDEGEGDRLYLRMDQWHHRIVLHASDSDDLAYLGWRVADPVEFDAMVAKLTAAGISLTVASEAEARERRVLGLAKLADPGGNPTEIFYGPQVDTHKPFHPGRPMYGKFVTGSEGIGHCILRQDDVPAAAAFYGLLGLRGSVEYHLQLPNGMVAQPYFMHCNERQHSVAFGLGPMEKRINHLMFEYTDLDDLGLAHDIVRARKIDVALQLGKHANDQALTFYCANPSGWLWEFGWGARKAPSQQEYYTRDIFGHGNEAAGYGMDIPLG</sequence>
<keyword id="KW-0058">Aromatic hydrocarbons catabolism</keyword>
<keyword id="KW-0223">Dioxygenase</keyword>
<keyword id="KW-0408">Iron</keyword>
<keyword id="KW-0479">Metal-binding</keyword>
<keyword id="KW-0560">Oxidoreductase</keyword>
<keyword id="KW-0677">Repeat</keyword>
<evidence type="ECO:0000250" key="1"/>
<evidence type="ECO:0000255" key="2">
    <source>
        <dbReference type="PROSITE-ProRule" id="PRU01163"/>
    </source>
</evidence>
<evidence type="ECO:0000305" key="3"/>
<feature type="chain" id="PRO_0000085036" description="Biphenyl-2,3-diol 1,2-dioxygenase">
    <location>
        <begin position="1"/>
        <end position="299"/>
    </location>
</feature>
<feature type="domain" description="VOC 1" evidence="2">
    <location>
        <begin position="6"/>
        <end position="121"/>
    </location>
</feature>
<feature type="domain" description="VOC 2" evidence="2">
    <location>
        <begin position="146"/>
        <end position="267"/>
    </location>
</feature>
<feature type="binding site" evidence="1">
    <location>
        <position position="149"/>
    </location>
    <ligand>
        <name>Fe cation</name>
        <dbReference type="ChEBI" id="CHEBI:24875"/>
    </ligand>
</feature>
<feature type="binding site" evidence="1">
    <location>
        <position position="212"/>
    </location>
    <ligand>
        <name>Fe cation</name>
        <dbReference type="ChEBI" id="CHEBI:24875"/>
    </ligand>
</feature>
<feature type="binding site" evidence="1">
    <location>
        <position position="263"/>
    </location>
    <ligand>
        <name>Fe cation</name>
        <dbReference type="ChEBI" id="CHEBI:24875"/>
    </ligand>
</feature>
<accession>P11122</accession>
<organism>
    <name type="scientific">Sphingomonas paucimobilis</name>
    <name type="common">Pseudomonas paucimobilis</name>
    <dbReference type="NCBI Taxonomy" id="13689"/>
    <lineage>
        <taxon>Bacteria</taxon>
        <taxon>Pseudomonadati</taxon>
        <taxon>Pseudomonadota</taxon>
        <taxon>Alphaproteobacteria</taxon>
        <taxon>Sphingomonadales</taxon>
        <taxon>Sphingomonadaceae</taxon>
        <taxon>Sphingomonas</taxon>
    </lineage>
</organism>
<name>BPHC_SPHPI</name>
<proteinExistence type="inferred from homology"/>
<dbReference type="EC" id="1.13.11.39"/>
<dbReference type="EMBL" id="M20640">
    <property type="protein sequence ID" value="AAA25678.1"/>
    <property type="molecule type" value="Genomic_DNA"/>
</dbReference>
<dbReference type="PIR" id="A28718">
    <property type="entry name" value="A28718"/>
</dbReference>
<dbReference type="SMR" id="P11122"/>
<dbReference type="STRING" id="13689.BV96_03597"/>
<dbReference type="eggNOG" id="COG0346">
    <property type="taxonomic scope" value="Bacteria"/>
</dbReference>
<dbReference type="UniPathway" id="UPA00155">
    <property type="reaction ID" value="UER00252"/>
</dbReference>
<dbReference type="GO" id="GO:0018583">
    <property type="term" value="F:biphenyl-2,3-diol 1,2-dioxygenase activity"/>
    <property type="evidence" value="ECO:0007669"/>
    <property type="project" value="UniProtKB-EC"/>
</dbReference>
<dbReference type="GO" id="GO:0008198">
    <property type="term" value="F:ferrous iron binding"/>
    <property type="evidence" value="ECO:0007669"/>
    <property type="project" value="InterPro"/>
</dbReference>
<dbReference type="GO" id="GO:0042178">
    <property type="term" value="P:xenobiotic catabolic process"/>
    <property type="evidence" value="ECO:0007669"/>
    <property type="project" value="InterPro"/>
</dbReference>
<dbReference type="CDD" id="cd07237">
    <property type="entry name" value="BphC1-RGP6_C_like"/>
    <property type="match status" value="1"/>
</dbReference>
<dbReference type="CDD" id="cd07252">
    <property type="entry name" value="BphC1-RGP6_N_like"/>
    <property type="match status" value="1"/>
</dbReference>
<dbReference type="FunFam" id="3.10.180.10:FF:000027">
    <property type="entry name" value="1,2-dihydroxynaphthalene dioxygenase"/>
    <property type="match status" value="1"/>
</dbReference>
<dbReference type="Gene3D" id="3.10.180.10">
    <property type="entry name" value="2,3-Dihydroxybiphenyl 1,2-Dioxygenase, domain 1"/>
    <property type="match status" value="2"/>
</dbReference>
<dbReference type="InterPro" id="IPR017626">
    <property type="entry name" value="DiOHbiphenyl_dOase"/>
</dbReference>
<dbReference type="InterPro" id="IPR029068">
    <property type="entry name" value="Glyas_Bleomycin-R_OHBP_Dase"/>
</dbReference>
<dbReference type="InterPro" id="IPR004360">
    <property type="entry name" value="Glyas_Fos-R_dOase_dom"/>
</dbReference>
<dbReference type="InterPro" id="IPR037523">
    <property type="entry name" value="VOC"/>
</dbReference>
<dbReference type="InterPro" id="IPR000486">
    <property type="entry name" value="Xdiol_ring_cleave_dOase_1/2"/>
</dbReference>
<dbReference type="NCBIfam" id="TIGR03213">
    <property type="entry name" value="23dbph12diox"/>
    <property type="match status" value="1"/>
</dbReference>
<dbReference type="Pfam" id="PF22632">
    <property type="entry name" value="BphC_D1"/>
    <property type="match status" value="1"/>
</dbReference>
<dbReference type="Pfam" id="PF00903">
    <property type="entry name" value="Glyoxalase"/>
    <property type="match status" value="1"/>
</dbReference>
<dbReference type="SUPFAM" id="SSF54593">
    <property type="entry name" value="Glyoxalase/Bleomycin resistance protein/Dihydroxybiphenyl dioxygenase"/>
    <property type="match status" value="1"/>
</dbReference>
<dbReference type="PROSITE" id="PS00082">
    <property type="entry name" value="EXTRADIOL_DIOXYGENAS"/>
    <property type="match status" value="1"/>
</dbReference>
<dbReference type="PROSITE" id="PS51819">
    <property type="entry name" value="VOC"/>
    <property type="match status" value="2"/>
</dbReference>
<protein>
    <recommendedName>
        <fullName>Biphenyl-2,3-diol 1,2-dioxygenase</fullName>
        <ecNumber>1.13.11.39</ecNumber>
    </recommendedName>
    <alternativeName>
        <fullName>2,3-dihydroxybiphenyl dioxygenase</fullName>
        <shortName>DHBD</shortName>
    </alternativeName>
    <alternativeName>
        <fullName>23OHBP oxygenase</fullName>
    </alternativeName>
</protein>
<comment type="catalytic activity">
    <reaction>
        <text>biphenyl-2,3-diol + O2 = 2-hydroxy-6-oxo-6-phenylhexa-2,4-dienoate + H(+)</text>
        <dbReference type="Rhea" id="RHEA:14413"/>
        <dbReference type="ChEBI" id="CHEBI:15378"/>
        <dbReference type="ChEBI" id="CHEBI:15379"/>
        <dbReference type="ChEBI" id="CHEBI:16205"/>
        <dbReference type="ChEBI" id="CHEBI:58284"/>
        <dbReference type="EC" id="1.13.11.39"/>
    </reaction>
</comment>
<comment type="cofactor">
    <cofactor>
        <name>Fe(2+)</name>
        <dbReference type="ChEBI" id="CHEBI:29033"/>
    </cofactor>
</comment>
<comment type="pathway">
    <text>Xenobiotic degradation; biphenyl degradation; 2-hydroxy-2,4-pentadienoate and benzoate from biphenyl: step 3/4.</text>
</comment>
<comment type="subunit">
    <text>Homooctamer.</text>
</comment>
<comment type="similarity">
    <text evidence="3">Belongs to the extradiol ring-cleavage dioxygenase family.</text>
</comment>
<gene>
    <name type="primary">bphC</name>
</gene>
<reference key="1">
    <citation type="journal article" date="1988" name="Biochemistry">
        <title>Cloning and nucleotide sequence of the 2,3-dihydroxybiphenyl dioxygenase gene from the PCB-degrading strain of Pseudomonas paucimobilis Q1.</title>
        <authorList>
            <person name="Taira K."/>
            <person name="Hayase N."/>
            <person name="Arimura N."/>
            <person name="Yamashita S."/>
            <person name="Miyazaki T."/>
            <person name="Furukawa K."/>
        </authorList>
    </citation>
    <scope>NUCLEOTIDE SEQUENCE [GENOMIC DNA]</scope>
    <source>
        <strain>Q1</strain>
    </source>
</reference>